<accession>Q9H0A3</accession>
<accession>B2R8E2</accession>
<reference key="1">
    <citation type="journal article" date="2001" name="Genome Res.">
        <title>Towards a catalog of human genes and proteins: sequencing and analysis of 500 novel complete protein coding human cDNAs.</title>
        <authorList>
            <person name="Wiemann S."/>
            <person name="Weil B."/>
            <person name="Wellenreuther R."/>
            <person name="Gassenhuber J."/>
            <person name="Glassl S."/>
            <person name="Ansorge W."/>
            <person name="Boecher M."/>
            <person name="Bloecker H."/>
            <person name="Bauersachs S."/>
            <person name="Blum H."/>
            <person name="Lauber J."/>
            <person name="Duesterhoeft A."/>
            <person name="Beyer A."/>
            <person name="Koehrer K."/>
            <person name="Strack N."/>
            <person name="Mewes H.-W."/>
            <person name="Ottenwaelder B."/>
            <person name="Obermaier B."/>
            <person name="Tampe J."/>
            <person name="Heubner D."/>
            <person name="Wambutt R."/>
            <person name="Korn B."/>
            <person name="Klein M."/>
            <person name="Poustka A."/>
        </authorList>
    </citation>
    <scope>NUCLEOTIDE SEQUENCE [LARGE SCALE MRNA]</scope>
    <source>
        <tissue>Testis</tissue>
    </source>
</reference>
<reference key="2">
    <citation type="journal article" date="2004" name="Genome Biol.">
        <title>A genome annotation-driven approach to cloning the human ORFeome.</title>
        <authorList>
            <person name="Collins J.E."/>
            <person name="Wright C.L."/>
            <person name="Edwards C.A."/>
            <person name="Davis M.P."/>
            <person name="Grinham J.A."/>
            <person name="Cole C.G."/>
            <person name="Goward M.E."/>
            <person name="Aguado B."/>
            <person name="Mallya M."/>
            <person name="Mokrab Y."/>
            <person name="Huckle E.J."/>
            <person name="Beare D.M."/>
            <person name="Dunham I."/>
        </authorList>
    </citation>
    <scope>NUCLEOTIDE SEQUENCE [LARGE SCALE MRNA]</scope>
</reference>
<reference key="3">
    <citation type="journal article" date="2004" name="Nat. Genet.">
        <title>Complete sequencing and characterization of 21,243 full-length human cDNAs.</title>
        <authorList>
            <person name="Ota T."/>
            <person name="Suzuki Y."/>
            <person name="Nishikawa T."/>
            <person name="Otsuki T."/>
            <person name="Sugiyama T."/>
            <person name="Irie R."/>
            <person name="Wakamatsu A."/>
            <person name="Hayashi K."/>
            <person name="Sato H."/>
            <person name="Nagai K."/>
            <person name="Kimura K."/>
            <person name="Makita H."/>
            <person name="Sekine M."/>
            <person name="Obayashi M."/>
            <person name="Nishi T."/>
            <person name="Shibahara T."/>
            <person name="Tanaka T."/>
            <person name="Ishii S."/>
            <person name="Yamamoto J."/>
            <person name="Saito K."/>
            <person name="Kawai Y."/>
            <person name="Isono Y."/>
            <person name="Nakamura Y."/>
            <person name="Nagahari K."/>
            <person name="Murakami K."/>
            <person name="Yasuda T."/>
            <person name="Iwayanagi T."/>
            <person name="Wagatsuma M."/>
            <person name="Shiratori A."/>
            <person name="Sudo H."/>
            <person name="Hosoiri T."/>
            <person name="Kaku Y."/>
            <person name="Kodaira H."/>
            <person name="Kondo H."/>
            <person name="Sugawara M."/>
            <person name="Takahashi M."/>
            <person name="Kanda K."/>
            <person name="Yokoi T."/>
            <person name="Furuya T."/>
            <person name="Kikkawa E."/>
            <person name="Omura Y."/>
            <person name="Abe K."/>
            <person name="Kamihara K."/>
            <person name="Katsuta N."/>
            <person name="Sato K."/>
            <person name="Tanikawa M."/>
            <person name="Yamazaki M."/>
            <person name="Ninomiya K."/>
            <person name="Ishibashi T."/>
            <person name="Yamashita H."/>
            <person name="Murakawa K."/>
            <person name="Fujimori K."/>
            <person name="Tanai H."/>
            <person name="Kimata M."/>
            <person name="Watanabe M."/>
            <person name="Hiraoka S."/>
            <person name="Chiba Y."/>
            <person name="Ishida S."/>
            <person name="Ono Y."/>
            <person name="Takiguchi S."/>
            <person name="Watanabe S."/>
            <person name="Yosida M."/>
            <person name="Hotuta T."/>
            <person name="Kusano J."/>
            <person name="Kanehori K."/>
            <person name="Takahashi-Fujii A."/>
            <person name="Hara H."/>
            <person name="Tanase T.-O."/>
            <person name="Nomura Y."/>
            <person name="Togiya S."/>
            <person name="Komai F."/>
            <person name="Hara R."/>
            <person name="Takeuchi K."/>
            <person name="Arita M."/>
            <person name="Imose N."/>
            <person name="Musashino K."/>
            <person name="Yuuki H."/>
            <person name="Oshima A."/>
            <person name="Sasaki N."/>
            <person name="Aotsuka S."/>
            <person name="Yoshikawa Y."/>
            <person name="Matsunawa H."/>
            <person name="Ichihara T."/>
            <person name="Shiohata N."/>
            <person name="Sano S."/>
            <person name="Moriya S."/>
            <person name="Momiyama H."/>
            <person name="Satoh N."/>
            <person name="Takami S."/>
            <person name="Terashima Y."/>
            <person name="Suzuki O."/>
            <person name="Nakagawa S."/>
            <person name="Senoh A."/>
            <person name="Mizoguchi H."/>
            <person name="Goto Y."/>
            <person name="Shimizu F."/>
            <person name="Wakebe H."/>
            <person name="Hishigaki H."/>
            <person name="Watanabe T."/>
            <person name="Sugiyama A."/>
            <person name="Takemoto M."/>
            <person name="Kawakami B."/>
            <person name="Yamazaki M."/>
            <person name="Watanabe K."/>
            <person name="Kumagai A."/>
            <person name="Itakura S."/>
            <person name="Fukuzumi Y."/>
            <person name="Fujimori Y."/>
            <person name="Komiyama M."/>
            <person name="Tashiro H."/>
            <person name="Tanigami A."/>
            <person name="Fujiwara T."/>
            <person name="Ono T."/>
            <person name="Yamada K."/>
            <person name="Fujii Y."/>
            <person name="Ozaki K."/>
            <person name="Hirao M."/>
            <person name="Ohmori Y."/>
            <person name="Kawabata A."/>
            <person name="Hikiji T."/>
            <person name="Kobatake N."/>
            <person name="Inagaki H."/>
            <person name="Ikema Y."/>
            <person name="Okamoto S."/>
            <person name="Okitani R."/>
            <person name="Kawakami T."/>
            <person name="Noguchi S."/>
            <person name="Itoh T."/>
            <person name="Shigeta K."/>
            <person name="Senba T."/>
            <person name="Matsumura K."/>
            <person name="Nakajima Y."/>
            <person name="Mizuno T."/>
            <person name="Morinaga M."/>
            <person name="Sasaki M."/>
            <person name="Togashi T."/>
            <person name="Oyama M."/>
            <person name="Hata H."/>
            <person name="Watanabe M."/>
            <person name="Komatsu T."/>
            <person name="Mizushima-Sugano J."/>
            <person name="Satoh T."/>
            <person name="Shirai Y."/>
            <person name="Takahashi Y."/>
            <person name="Nakagawa K."/>
            <person name="Okumura K."/>
            <person name="Nagase T."/>
            <person name="Nomura N."/>
            <person name="Kikuchi H."/>
            <person name="Masuho Y."/>
            <person name="Yamashita R."/>
            <person name="Nakai K."/>
            <person name="Yada T."/>
            <person name="Nakamura Y."/>
            <person name="Ohara O."/>
            <person name="Isogai T."/>
            <person name="Sugano S."/>
        </authorList>
    </citation>
    <scope>NUCLEOTIDE SEQUENCE [LARGE SCALE MRNA]</scope>
    <source>
        <tissue>Testis</tissue>
    </source>
</reference>
<reference key="4">
    <citation type="journal article" date="1999" name="Nature">
        <title>The DNA sequence of human chromosome 22.</title>
        <authorList>
            <person name="Dunham I."/>
            <person name="Hunt A.R."/>
            <person name="Collins J.E."/>
            <person name="Bruskiewich R."/>
            <person name="Beare D.M."/>
            <person name="Clamp M."/>
            <person name="Smink L.J."/>
            <person name="Ainscough R."/>
            <person name="Almeida J.P."/>
            <person name="Babbage A.K."/>
            <person name="Bagguley C."/>
            <person name="Bailey J."/>
            <person name="Barlow K.F."/>
            <person name="Bates K.N."/>
            <person name="Beasley O.P."/>
            <person name="Bird C.P."/>
            <person name="Blakey S.E."/>
            <person name="Bridgeman A.M."/>
            <person name="Buck D."/>
            <person name="Burgess J."/>
            <person name="Burrill W.D."/>
            <person name="Burton J."/>
            <person name="Carder C."/>
            <person name="Carter N.P."/>
            <person name="Chen Y."/>
            <person name="Clark G."/>
            <person name="Clegg S.M."/>
            <person name="Cobley V.E."/>
            <person name="Cole C.G."/>
            <person name="Collier R.E."/>
            <person name="Connor R."/>
            <person name="Conroy D."/>
            <person name="Corby N.R."/>
            <person name="Coville G.J."/>
            <person name="Cox A.V."/>
            <person name="Davis J."/>
            <person name="Dawson E."/>
            <person name="Dhami P.D."/>
            <person name="Dockree C."/>
            <person name="Dodsworth S.J."/>
            <person name="Durbin R.M."/>
            <person name="Ellington A.G."/>
            <person name="Evans K.L."/>
            <person name="Fey J.M."/>
            <person name="Fleming K."/>
            <person name="French L."/>
            <person name="Garner A.A."/>
            <person name="Gilbert J.G.R."/>
            <person name="Goward M.E."/>
            <person name="Grafham D.V."/>
            <person name="Griffiths M.N.D."/>
            <person name="Hall C."/>
            <person name="Hall R.E."/>
            <person name="Hall-Tamlyn G."/>
            <person name="Heathcott R.W."/>
            <person name="Ho S."/>
            <person name="Holmes S."/>
            <person name="Hunt S.E."/>
            <person name="Jones M.C."/>
            <person name="Kershaw J."/>
            <person name="Kimberley A.M."/>
            <person name="King A."/>
            <person name="Laird G.K."/>
            <person name="Langford C.F."/>
            <person name="Leversha M.A."/>
            <person name="Lloyd C."/>
            <person name="Lloyd D.M."/>
            <person name="Martyn I.D."/>
            <person name="Mashreghi-Mohammadi M."/>
            <person name="Matthews L.H."/>
            <person name="Mccann O.T."/>
            <person name="Mcclay J."/>
            <person name="Mclaren S."/>
            <person name="McMurray A.A."/>
            <person name="Milne S.A."/>
            <person name="Mortimore B.J."/>
            <person name="Odell C.N."/>
            <person name="Pavitt R."/>
            <person name="Pearce A.V."/>
            <person name="Pearson D."/>
            <person name="Phillimore B.J.C.T."/>
            <person name="Phillips S.H."/>
            <person name="Plumb R.W."/>
            <person name="Ramsay H."/>
            <person name="Ramsey Y."/>
            <person name="Rogers L."/>
            <person name="Ross M.T."/>
            <person name="Scott C.E."/>
            <person name="Sehra H.K."/>
            <person name="Skuce C.D."/>
            <person name="Smalley S."/>
            <person name="Smith M.L."/>
            <person name="Soderlund C."/>
            <person name="Spragon L."/>
            <person name="Steward C.A."/>
            <person name="Sulston J.E."/>
            <person name="Swann R.M."/>
            <person name="Vaudin M."/>
            <person name="Wall M."/>
            <person name="Wallis J.M."/>
            <person name="Whiteley M.N."/>
            <person name="Willey D.L."/>
            <person name="Williams L."/>
            <person name="Williams S.A."/>
            <person name="Williamson H."/>
            <person name="Wilmer T.E."/>
            <person name="Wilming L."/>
            <person name="Wright C.L."/>
            <person name="Hubbard T."/>
            <person name="Bentley D.R."/>
            <person name="Beck S."/>
            <person name="Rogers J."/>
            <person name="Shimizu N."/>
            <person name="Minoshima S."/>
            <person name="Kawasaki K."/>
            <person name="Sasaki T."/>
            <person name="Asakawa S."/>
            <person name="Kudoh J."/>
            <person name="Shintani A."/>
            <person name="Shibuya K."/>
            <person name="Yoshizaki Y."/>
            <person name="Aoki N."/>
            <person name="Mitsuyama S."/>
            <person name="Roe B.A."/>
            <person name="Chen F."/>
            <person name="Chu L."/>
            <person name="Crabtree J."/>
            <person name="Deschamps S."/>
            <person name="Do A."/>
            <person name="Do T."/>
            <person name="Dorman A."/>
            <person name="Fang F."/>
            <person name="Fu Y."/>
            <person name="Hu P."/>
            <person name="Hua A."/>
            <person name="Kenton S."/>
            <person name="Lai H."/>
            <person name="Lao H.I."/>
            <person name="Lewis J."/>
            <person name="Lewis S."/>
            <person name="Lin S.-P."/>
            <person name="Loh P."/>
            <person name="Malaj E."/>
            <person name="Nguyen T."/>
            <person name="Pan H."/>
            <person name="Phan S."/>
            <person name="Qi S."/>
            <person name="Qian Y."/>
            <person name="Ray L."/>
            <person name="Ren Q."/>
            <person name="Shaull S."/>
            <person name="Sloan D."/>
            <person name="Song L."/>
            <person name="Wang Q."/>
            <person name="Wang Y."/>
            <person name="Wang Z."/>
            <person name="White J."/>
            <person name="Willingham D."/>
            <person name="Wu H."/>
            <person name="Yao Z."/>
            <person name="Zhan M."/>
            <person name="Zhang G."/>
            <person name="Chissoe S."/>
            <person name="Murray J."/>
            <person name="Miller N."/>
            <person name="Minx P."/>
            <person name="Fulton R."/>
            <person name="Johnson D."/>
            <person name="Bemis G."/>
            <person name="Bentley D."/>
            <person name="Bradshaw H."/>
            <person name="Bourne S."/>
            <person name="Cordes M."/>
            <person name="Du Z."/>
            <person name="Fulton L."/>
            <person name="Goela D."/>
            <person name="Graves T."/>
            <person name="Hawkins J."/>
            <person name="Hinds K."/>
            <person name="Kemp K."/>
            <person name="Latreille P."/>
            <person name="Layman D."/>
            <person name="Ozersky P."/>
            <person name="Rohlfing T."/>
            <person name="Scheet P."/>
            <person name="Walker C."/>
            <person name="Wamsley A."/>
            <person name="Wohldmann P."/>
            <person name="Pepin K."/>
            <person name="Nelson J."/>
            <person name="Korf I."/>
            <person name="Bedell J.A."/>
            <person name="Hillier L.W."/>
            <person name="Mardis E."/>
            <person name="Waterston R."/>
            <person name="Wilson R."/>
            <person name="Emanuel B.S."/>
            <person name="Shaikh T."/>
            <person name="Kurahashi H."/>
            <person name="Saitta S."/>
            <person name="Budarf M.L."/>
            <person name="McDermid H.E."/>
            <person name="Johnson A."/>
            <person name="Wong A.C.C."/>
            <person name="Morrow B.E."/>
            <person name="Edelmann L."/>
            <person name="Kim U.J."/>
            <person name="Shizuya H."/>
            <person name="Simon M.I."/>
            <person name="Dumanski J.P."/>
            <person name="Peyrard M."/>
            <person name="Kedra D."/>
            <person name="Seroussi E."/>
            <person name="Fransson I."/>
            <person name="Tapia I."/>
            <person name="Bruder C.E."/>
            <person name="O'Brien K.P."/>
            <person name="Wilkinson P."/>
            <person name="Bodenteich A."/>
            <person name="Hartman K."/>
            <person name="Hu X."/>
            <person name="Khan A.S."/>
            <person name="Lane L."/>
            <person name="Tilahun Y."/>
            <person name="Wright H."/>
        </authorList>
    </citation>
    <scope>NUCLEOTIDE SEQUENCE [LARGE SCALE GENOMIC DNA]</scope>
</reference>
<reference key="5">
    <citation type="submission" date="2005-07" db="EMBL/GenBank/DDBJ databases">
        <authorList>
            <person name="Mural R.J."/>
            <person name="Istrail S."/>
            <person name="Sutton G.G."/>
            <person name="Florea L."/>
            <person name="Halpern A.L."/>
            <person name="Mobarry C.M."/>
            <person name="Lippert R."/>
            <person name="Walenz B."/>
            <person name="Shatkay H."/>
            <person name="Dew I."/>
            <person name="Miller J.R."/>
            <person name="Flanigan M.J."/>
            <person name="Edwards N.J."/>
            <person name="Bolanos R."/>
            <person name="Fasulo D."/>
            <person name="Halldorsson B.V."/>
            <person name="Hannenhalli S."/>
            <person name="Turner R."/>
            <person name="Yooseph S."/>
            <person name="Lu F."/>
            <person name="Nusskern D.R."/>
            <person name="Shue B.C."/>
            <person name="Zheng X.H."/>
            <person name="Zhong F."/>
            <person name="Delcher A.L."/>
            <person name="Huson D.H."/>
            <person name="Kravitz S.A."/>
            <person name="Mouchard L."/>
            <person name="Reinert K."/>
            <person name="Remington K.A."/>
            <person name="Clark A.G."/>
            <person name="Waterman M.S."/>
            <person name="Eichler E.E."/>
            <person name="Adams M.D."/>
            <person name="Hunkapiller M.W."/>
            <person name="Myers E.W."/>
            <person name="Venter J.C."/>
        </authorList>
    </citation>
    <scope>NUCLEOTIDE SEQUENCE [LARGE SCALE GENOMIC DNA]</scope>
</reference>
<name>T191A_HUMAN</name>
<protein>
    <recommendedName>
        <fullName>Transmembrane protein 191A</fullName>
    </recommendedName>
</protein>
<sequence length="160" mass="17963">MMNNTDFLMLNNPWNKLCLVSMDFCFPLDFVSNLFWIFASKFIIVTGQIKADFKRTSWEAKAEGSLEPGRLKLQLASIVPLYSSLVTAGPASKIIILKRTSLPTVSPSNERAYLLPVSFTDLAHVFYLSYFSINAKSNSFSLDIIIALGIPHNTQAHFNH</sequence>
<feature type="chain" id="PRO_0000340715" description="Transmembrane protein 191A">
    <location>
        <begin position="1"/>
        <end position="160"/>
    </location>
</feature>
<feature type="transmembrane region" description="Helical" evidence="1">
    <location>
        <begin position="24"/>
        <end position="44"/>
    </location>
</feature>
<keyword id="KW-0472">Membrane</keyword>
<keyword id="KW-1185">Reference proteome</keyword>
<keyword id="KW-0812">Transmembrane</keyword>
<keyword id="KW-1133">Transmembrane helix</keyword>
<gene>
    <name type="primary">TMEM191A</name>
</gene>
<organism>
    <name type="scientific">Homo sapiens</name>
    <name type="common">Human</name>
    <dbReference type="NCBI Taxonomy" id="9606"/>
    <lineage>
        <taxon>Eukaryota</taxon>
        <taxon>Metazoa</taxon>
        <taxon>Chordata</taxon>
        <taxon>Craniata</taxon>
        <taxon>Vertebrata</taxon>
        <taxon>Euteleostomi</taxon>
        <taxon>Mammalia</taxon>
        <taxon>Eutheria</taxon>
        <taxon>Euarchontoglires</taxon>
        <taxon>Primates</taxon>
        <taxon>Haplorrhini</taxon>
        <taxon>Catarrhini</taxon>
        <taxon>Hominidae</taxon>
        <taxon>Homo</taxon>
    </lineage>
</organism>
<evidence type="ECO:0000255" key="1"/>
<evidence type="ECO:0000305" key="2"/>
<proteinExistence type="evidence at transcript level"/>
<dbReference type="EMBL" id="AL136879">
    <property type="protein sequence ID" value="CAB66813.1"/>
    <property type="molecule type" value="mRNA"/>
</dbReference>
<dbReference type="EMBL" id="CR456359">
    <property type="protein sequence ID" value="CAG30245.1"/>
    <property type="molecule type" value="mRNA"/>
</dbReference>
<dbReference type="EMBL" id="AK313335">
    <property type="protein sequence ID" value="BAG36139.1"/>
    <property type="molecule type" value="mRNA"/>
</dbReference>
<dbReference type="EMBL" id="AC007050">
    <property type="status" value="NOT_ANNOTATED_CDS"/>
    <property type="molecule type" value="Genomic_DNA"/>
</dbReference>
<dbReference type="EMBL" id="CH891377">
    <property type="protein sequence ID" value="EAW50847.1"/>
    <property type="molecule type" value="Genomic_DNA"/>
</dbReference>
<dbReference type="BioMuta" id="HGNC:25317"/>
<dbReference type="AGR" id="HGNC:25317"/>
<dbReference type="GeneCards" id="TMEM191A"/>
<dbReference type="HGNC" id="HGNC:25317">
    <property type="gene designation" value="TMEM191A"/>
</dbReference>
<dbReference type="neXtProt" id="NX_Q9H0A3"/>
<dbReference type="InParanoid" id="Q9H0A3"/>
<dbReference type="PAN-GO" id="Q9H0A3">
    <property type="GO annotations" value="0 GO annotations based on evolutionary models"/>
</dbReference>
<dbReference type="PathwayCommons" id="Q9H0A3"/>
<dbReference type="Pharos" id="Q9H0A3">
    <property type="development level" value="Tdark"/>
</dbReference>
<dbReference type="PRO" id="PR:Q9H0A3"/>
<dbReference type="Proteomes" id="UP000005640">
    <property type="component" value="Unplaced"/>
</dbReference>
<dbReference type="RNAct" id="Q9H0A3">
    <property type="molecule type" value="protein"/>
</dbReference>
<dbReference type="GO" id="GO:0016020">
    <property type="term" value="C:membrane"/>
    <property type="evidence" value="ECO:0007669"/>
    <property type="project" value="UniProtKB-SubCell"/>
</dbReference>
<comment type="subcellular location">
    <subcellularLocation>
        <location evidence="1">Membrane</location>
        <topology evidence="1">Single-pass membrane protein</topology>
    </subcellularLocation>
</comment>
<comment type="similarity">
    <text evidence="2">Belongs to the TMEM191 family.</text>
</comment>